<proteinExistence type="inferred from homology"/>
<accession>P53553</accession>
<sequence length="407" mass="44002">MGIIVQKFGGTSVGSIERIQHVANRVIEEVQKGNDVVVVVSAMGKTTDELVNLAKQISNHPSKREMDMLLSTGEQVSIALLAMSLHEKGYKAVSLTGWQAGITTEEMHGNARIMNIDTTRIRRCLDEGAIVIVAGFQGVTETGEITTLGRGGSDTTAVALAAALKAEKCDIYTDVTGVFTTDPRYVKTARKIKEISYDEMLELANLGAGVLHPRAVEFAKNYEVPLEVRSSMENERGTMVKEEVSMEQHLIVRGIAFEDQVTRVTVVGIEKYLQSVATIFTALANRGINVDIIIQNATNSETASVSFSIRTEDLPETLQVLQALEGADVHYESGLAKVSIVGSGMISNPGVAARVFEVLADQGIEIKMVSISEIKISTVIDEKYMVSAVEELHEAFGLAEEAAAVRS</sequence>
<keyword id="KW-0024">Alternative initiation</keyword>
<keyword id="KW-0028">Amino-acid biosynthesis</keyword>
<keyword id="KW-0067">ATP-binding</keyword>
<keyword id="KW-0220">Diaminopimelate biosynthesis</keyword>
<keyword id="KW-0418">Kinase</keyword>
<keyword id="KW-0457">Lysine biosynthesis</keyword>
<keyword id="KW-0547">Nucleotide-binding</keyword>
<keyword id="KW-0677">Repeat</keyword>
<keyword id="KW-0808">Transferase</keyword>
<reference key="1">
    <citation type="journal article" date="1996" name="Gene">
        <title>Sequence of the Bacillus stearothermophilus gene encoding aspartokinase II.</title>
        <authorList>
            <person name="Cantoni R."/>
            <person name="Labo M."/>
            <person name="de Rossi E."/>
            <person name="Riccardi G."/>
        </authorList>
    </citation>
    <scope>NUCLEOTIDE SEQUENCE [GENOMIC DNA]</scope>
    <source>
        <strain>NUB3621</strain>
    </source>
</reference>
<name>AK_GEOSE</name>
<evidence type="ECO:0000250" key="1"/>
<evidence type="ECO:0000255" key="2">
    <source>
        <dbReference type="PROSITE-ProRule" id="PRU01007"/>
    </source>
</evidence>
<evidence type="ECO:0000305" key="3"/>
<organism>
    <name type="scientific">Geobacillus stearothermophilus</name>
    <name type="common">Bacillus stearothermophilus</name>
    <dbReference type="NCBI Taxonomy" id="1422"/>
    <lineage>
        <taxon>Bacteria</taxon>
        <taxon>Bacillati</taxon>
        <taxon>Bacillota</taxon>
        <taxon>Bacilli</taxon>
        <taxon>Bacillales</taxon>
        <taxon>Anoxybacillaceae</taxon>
        <taxon>Geobacillus</taxon>
    </lineage>
</organism>
<comment type="function">
    <text evidence="1">Catalyzes the phosphorylation of the beta-carboxyl group of aspartic acid with ATP to yield 4-phospho-L-aspartate, which is involved in the branched biosynthetic pathway leading to the biosynthesis of amino acids threonine, isoleucine and methionine.</text>
</comment>
<comment type="catalytic activity">
    <reaction>
        <text>L-aspartate + ATP = 4-phospho-L-aspartate + ADP</text>
        <dbReference type="Rhea" id="RHEA:23776"/>
        <dbReference type="ChEBI" id="CHEBI:29991"/>
        <dbReference type="ChEBI" id="CHEBI:30616"/>
        <dbReference type="ChEBI" id="CHEBI:57535"/>
        <dbReference type="ChEBI" id="CHEBI:456216"/>
        <dbReference type="EC" id="2.7.2.4"/>
    </reaction>
</comment>
<comment type="activity regulation">
    <text evidence="1">Lysine-sensitive.</text>
</comment>
<comment type="pathway">
    <text>Amino-acid biosynthesis; L-lysine biosynthesis via DAP pathway; (S)-tetrahydrodipicolinate from L-aspartate: step 1/4.</text>
</comment>
<comment type="pathway">
    <text>Amino-acid biosynthesis; L-methionine biosynthesis via de novo pathway; L-homoserine from L-aspartate: step 1/3.</text>
</comment>
<comment type="pathway">
    <text>Amino-acid biosynthesis; L-threonine biosynthesis; L-threonine from L-aspartate: step 1/5.</text>
</comment>
<comment type="subunit">
    <text evidence="1">Tetramer consisting of 2 isoforms Alpha (catalytic and regulation) and of a homodimer of 2 isoforms Beta (regulation).</text>
</comment>
<comment type="alternative products">
    <event type="alternative initiation"/>
    <isoform>
        <id>P53553-1</id>
        <name>Alpha</name>
        <name>Aspartokinase 2 subunit alpha</name>
        <sequence type="displayed"/>
    </isoform>
    <isoform>
        <id>P53553-2</id>
        <name>Beta</name>
        <name>Aspartokinase 2 subunit beta</name>
        <sequence type="described" ref="VSP_018654"/>
    </isoform>
</comment>
<comment type="similarity">
    <text evidence="3">Belongs to the aspartokinase family.</text>
</comment>
<feature type="chain" id="PRO_0000002371" description="Aspartokinase">
    <location>
        <begin position="1"/>
        <end position="407"/>
    </location>
</feature>
<feature type="domain" description="ACT 1" evidence="2">
    <location>
        <begin position="264"/>
        <end position="338"/>
    </location>
</feature>
<feature type="domain" description="ACT 2" evidence="2">
    <location>
        <begin position="340"/>
        <end position="407"/>
    </location>
</feature>
<feature type="binding site" evidence="1">
    <location>
        <begin position="7"/>
        <end position="10"/>
    </location>
    <ligand>
        <name>ATP</name>
        <dbReference type="ChEBI" id="CHEBI:30616"/>
    </ligand>
</feature>
<feature type="binding site" evidence="1">
    <location>
        <begin position="25"/>
        <end position="30"/>
    </location>
    <ligand>
        <name>substrate</name>
    </ligand>
</feature>
<feature type="binding site" evidence="1">
    <location>
        <position position="41"/>
    </location>
    <ligand>
        <name>ATP</name>
        <dbReference type="ChEBI" id="CHEBI:30616"/>
    </ligand>
</feature>
<feature type="binding site" evidence="1">
    <location>
        <begin position="47"/>
        <end position="49"/>
    </location>
    <ligand>
        <name>substrate</name>
    </ligand>
</feature>
<feature type="binding site" evidence="1">
    <location>
        <position position="74"/>
    </location>
    <ligand>
        <name>substrate</name>
    </ligand>
</feature>
<feature type="binding site" evidence="1">
    <location>
        <begin position="125"/>
        <end position="126"/>
    </location>
    <ligand>
        <name>substrate</name>
    </ligand>
</feature>
<feature type="binding site" evidence="1">
    <location>
        <begin position="150"/>
        <end position="153"/>
    </location>
    <ligand>
        <name>substrate</name>
    </ligand>
</feature>
<feature type="binding site" evidence="1">
    <location>
        <position position="153"/>
    </location>
    <ligand>
        <name>substrate</name>
    </ligand>
</feature>
<feature type="binding site" evidence="1">
    <location>
        <begin position="173"/>
        <end position="174"/>
    </location>
    <ligand>
        <name>ATP</name>
        <dbReference type="ChEBI" id="CHEBI:30616"/>
    </ligand>
</feature>
<feature type="binding site" evidence="1">
    <location>
        <begin position="179"/>
        <end position="184"/>
    </location>
    <ligand>
        <name>ATP</name>
        <dbReference type="ChEBI" id="CHEBI:30616"/>
    </ligand>
</feature>
<feature type="binding site" evidence="1">
    <location>
        <begin position="289"/>
        <end position="291"/>
    </location>
    <ligand>
        <name>substrate</name>
    </ligand>
</feature>
<feature type="binding site" evidence="1">
    <location>
        <position position="295"/>
    </location>
    <ligand>
        <name>substrate</name>
    </ligand>
</feature>
<feature type="binding site" evidence="1">
    <location>
        <begin position="351"/>
        <end position="352"/>
    </location>
    <ligand>
        <name>substrate</name>
    </ligand>
</feature>
<feature type="binding site" evidence="1">
    <location>
        <begin position="365"/>
        <end position="366"/>
    </location>
    <ligand>
        <name>substrate</name>
    </ligand>
</feature>
<feature type="binding site" evidence="1">
    <location>
        <begin position="372"/>
        <end position="373"/>
    </location>
    <ligand>
        <name>substrate</name>
    </ligand>
</feature>
<feature type="site" description="Contribution to the catalysis" evidence="1">
    <location>
        <position position="7"/>
    </location>
</feature>
<feature type="site" description="Contribution to the catalysis" evidence="1">
    <location>
        <position position="74"/>
    </location>
</feature>
<feature type="splice variant" id="VSP_018654" description="In isoform Beta." evidence="3">
    <location>
        <begin position="1"/>
        <end position="245"/>
    </location>
</feature>
<gene>
    <name type="primary">lysC</name>
</gene>
<dbReference type="EC" id="2.7.2.4"/>
<dbReference type="EMBL" id="L46351">
    <property type="protein sequence ID" value="AAB06216.1"/>
    <property type="molecule type" value="Genomic_DNA"/>
</dbReference>
<dbReference type="PIR" id="JC4640">
    <property type="entry name" value="JC4640"/>
</dbReference>
<dbReference type="SMR" id="P53553"/>
<dbReference type="UniPathway" id="UPA00034">
    <property type="reaction ID" value="UER00015"/>
</dbReference>
<dbReference type="UniPathway" id="UPA00050">
    <property type="reaction ID" value="UER00461"/>
</dbReference>
<dbReference type="UniPathway" id="UPA00051">
    <property type="reaction ID" value="UER00462"/>
</dbReference>
<dbReference type="GO" id="GO:0005829">
    <property type="term" value="C:cytosol"/>
    <property type="evidence" value="ECO:0007669"/>
    <property type="project" value="TreeGrafter"/>
</dbReference>
<dbReference type="GO" id="GO:0004072">
    <property type="term" value="F:aspartate kinase activity"/>
    <property type="evidence" value="ECO:0007669"/>
    <property type="project" value="UniProtKB-EC"/>
</dbReference>
<dbReference type="GO" id="GO:0005524">
    <property type="term" value="F:ATP binding"/>
    <property type="evidence" value="ECO:0007669"/>
    <property type="project" value="UniProtKB-KW"/>
</dbReference>
<dbReference type="GO" id="GO:0019877">
    <property type="term" value="P:diaminopimelate biosynthetic process"/>
    <property type="evidence" value="ECO:0007669"/>
    <property type="project" value="UniProtKB-KW"/>
</dbReference>
<dbReference type="GO" id="GO:0009090">
    <property type="term" value="P:homoserine biosynthetic process"/>
    <property type="evidence" value="ECO:0007669"/>
    <property type="project" value="TreeGrafter"/>
</dbReference>
<dbReference type="GO" id="GO:0009089">
    <property type="term" value="P:lysine biosynthetic process via diaminopimelate"/>
    <property type="evidence" value="ECO:0007669"/>
    <property type="project" value="UniProtKB-UniPathway"/>
</dbReference>
<dbReference type="GO" id="GO:0009088">
    <property type="term" value="P:threonine biosynthetic process"/>
    <property type="evidence" value="ECO:0007669"/>
    <property type="project" value="UniProtKB-UniPathway"/>
</dbReference>
<dbReference type="CDD" id="cd04261">
    <property type="entry name" value="AAK_AKii-LysC-BS"/>
    <property type="match status" value="1"/>
</dbReference>
<dbReference type="CDD" id="cd04923">
    <property type="entry name" value="ACT_AK-LysC-DapG-like_2"/>
    <property type="match status" value="1"/>
</dbReference>
<dbReference type="CDD" id="cd04913">
    <property type="entry name" value="ACT_AKii-LysC-BS-like_1"/>
    <property type="match status" value="1"/>
</dbReference>
<dbReference type="FunFam" id="3.40.1160.10:FF:000002">
    <property type="entry name" value="Aspartokinase"/>
    <property type="match status" value="1"/>
</dbReference>
<dbReference type="FunFam" id="3.30.2130.10:FF:000001">
    <property type="entry name" value="Bifunctional aspartokinase/homoserine dehydrogenase"/>
    <property type="match status" value="1"/>
</dbReference>
<dbReference type="Gene3D" id="3.40.1160.10">
    <property type="entry name" value="Acetylglutamate kinase-like"/>
    <property type="match status" value="1"/>
</dbReference>
<dbReference type="Gene3D" id="3.30.2130.10">
    <property type="entry name" value="VC0802-like"/>
    <property type="match status" value="1"/>
</dbReference>
<dbReference type="InterPro" id="IPR036393">
    <property type="entry name" value="AceGlu_kinase-like_sf"/>
</dbReference>
<dbReference type="InterPro" id="IPR045865">
    <property type="entry name" value="ACT-like_dom_sf"/>
</dbReference>
<dbReference type="InterPro" id="IPR054352">
    <property type="entry name" value="ACT_Aspartokinase"/>
</dbReference>
<dbReference type="InterPro" id="IPR002912">
    <property type="entry name" value="ACT_dom"/>
</dbReference>
<dbReference type="InterPro" id="IPR041740">
    <property type="entry name" value="AKii-LysC-BS"/>
</dbReference>
<dbReference type="InterPro" id="IPR001048">
    <property type="entry name" value="Asp/Glu/Uridylate_kinase"/>
</dbReference>
<dbReference type="InterPro" id="IPR005260">
    <property type="entry name" value="Asp_kin_monofn"/>
</dbReference>
<dbReference type="InterPro" id="IPR001341">
    <property type="entry name" value="Asp_kinase"/>
</dbReference>
<dbReference type="InterPro" id="IPR018042">
    <property type="entry name" value="Aspartate_kinase_CS"/>
</dbReference>
<dbReference type="NCBIfam" id="TIGR00656">
    <property type="entry name" value="asp_kin_monofn"/>
    <property type="match status" value="1"/>
</dbReference>
<dbReference type="NCBIfam" id="TIGR00657">
    <property type="entry name" value="asp_kinases"/>
    <property type="match status" value="1"/>
</dbReference>
<dbReference type="NCBIfam" id="NF005154">
    <property type="entry name" value="PRK06635.1-2"/>
    <property type="match status" value="1"/>
</dbReference>
<dbReference type="NCBIfam" id="NF005155">
    <property type="entry name" value="PRK06635.1-4"/>
    <property type="match status" value="1"/>
</dbReference>
<dbReference type="NCBIfam" id="NF005156">
    <property type="entry name" value="PRK06635.1-5"/>
    <property type="match status" value="1"/>
</dbReference>
<dbReference type="PANTHER" id="PTHR21499">
    <property type="entry name" value="ASPARTATE KINASE"/>
    <property type="match status" value="1"/>
</dbReference>
<dbReference type="PANTHER" id="PTHR21499:SF68">
    <property type="entry name" value="ASPARTOKINASE 2"/>
    <property type="match status" value="1"/>
</dbReference>
<dbReference type="Pfam" id="PF00696">
    <property type="entry name" value="AA_kinase"/>
    <property type="match status" value="1"/>
</dbReference>
<dbReference type="Pfam" id="PF22468">
    <property type="entry name" value="ACT_9"/>
    <property type="match status" value="1"/>
</dbReference>
<dbReference type="PIRSF" id="PIRSF000726">
    <property type="entry name" value="Asp_kin"/>
    <property type="match status" value="1"/>
</dbReference>
<dbReference type="SUPFAM" id="SSF55021">
    <property type="entry name" value="ACT-like"/>
    <property type="match status" value="2"/>
</dbReference>
<dbReference type="SUPFAM" id="SSF53633">
    <property type="entry name" value="Carbamate kinase-like"/>
    <property type="match status" value="1"/>
</dbReference>
<dbReference type="PROSITE" id="PS51671">
    <property type="entry name" value="ACT"/>
    <property type="match status" value="2"/>
</dbReference>
<dbReference type="PROSITE" id="PS00324">
    <property type="entry name" value="ASPARTOKINASE"/>
    <property type="match status" value="1"/>
</dbReference>
<protein>
    <recommendedName>
        <fullName>Aspartokinase</fullName>
        <ecNumber>2.7.2.4</ecNumber>
    </recommendedName>
    <alternativeName>
        <fullName>Aspartate kinase</fullName>
    </alternativeName>
</protein>